<comment type="function">
    <text evidence="1">Cell wall formation.</text>
</comment>
<comment type="catalytic activity">
    <reaction evidence="1">
        <text>UDP-N-acetyl-alpha-D-muramate + L-alanine + ATP = UDP-N-acetyl-alpha-D-muramoyl-L-alanine + ADP + phosphate + H(+)</text>
        <dbReference type="Rhea" id="RHEA:23372"/>
        <dbReference type="ChEBI" id="CHEBI:15378"/>
        <dbReference type="ChEBI" id="CHEBI:30616"/>
        <dbReference type="ChEBI" id="CHEBI:43474"/>
        <dbReference type="ChEBI" id="CHEBI:57972"/>
        <dbReference type="ChEBI" id="CHEBI:70757"/>
        <dbReference type="ChEBI" id="CHEBI:83898"/>
        <dbReference type="ChEBI" id="CHEBI:456216"/>
        <dbReference type="EC" id="6.3.2.8"/>
    </reaction>
</comment>
<comment type="pathway">
    <text evidence="1">Cell wall biogenesis; peptidoglycan biosynthesis.</text>
</comment>
<comment type="subcellular location">
    <subcellularLocation>
        <location evidence="1">Cytoplasm</location>
    </subcellularLocation>
</comment>
<comment type="similarity">
    <text evidence="1">Belongs to the MurCDEF family.</text>
</comment>
<organism>
    <name type="scientific">Borreliella burgdorferi (strain ATCC 35210 / DSM 4680 / CIP 102532 / B31)</name>
    <name type="common">Borrelia burgdorferi</name>
    <dbReference type="NCBI Taxonomy" id="224326"/>
    <lineage>
        <taxon>Bacteria</taxon>
        <taxon>Pseudomonadati</taxon>
        <taxon>Spirochaetota</taxon>
        <taxon>Spirochaetia</taxon>
        <taxon>Spirochaetales</taxon>
        <taxon>Borreliaceae</taxon>
        <taxon>Borreliella</taxon>
    </lineage>
</organism>
<gene>
    <name evidence="1" type="primary">murC</name>
    <name type="ordered locus">BB_0817</name>
</gene>
<name>MURC_BORBU</name>
<keyword id="KW-0067">ATP-binding</keyword>
<keyword id="KW-0131">Cell cycle</keyword>
<keyword id="KW-0132">Cell division</keyword>
<keyword id="KW-0133">Cell shape</keyword>
<keyword id="KW-0961">Cell wall biogenesis/degradation</keyword>
<keyword id="KW-0963">Cytoplasm</keyword>
<keyword id="KW-0436">Ligase</keyword>
<keyword id="KW-0547">Nucleotide-binding</keyword>
<keyword id="KW-0573">Peptidoglycan synthesis</keyword>
<keyword id="KW-1185">Reference proteome</keyword>
<dbReference type="EC" id="6.3.2.8" evidence="1"/>
<dbReference type="EMBL" id="AE000783">
    <property type="protein sequence ID" value="AAC67166.1"/>
    <property type="molecule type" value="Genomic_DNA"/>
</dbReference>
<dbReference type="PIR" id="H70201">
    <property type="entry name" value="H70201"/>
</dbReference>
<dbReference type="RefSeq" id="NP_212951.1">
    <property type="nucleotide sequence ID" value="NC_001318.1"/>
</dbReference>
<dbReference type="RefSeq" id="WP_002656222.1">
    <property type="nucleotide sequence ID" value="NC_001318.1"/>
</dbReference>
<dbReference type="SMR" id="O51757"/>
<dbReference type="STRING" id="224326.BB_0817"/>
<dbReference type="PaxDb" id="224326-BB_0817"/>
<dbReference type="EnsemblBacteria" id="AAC67166">
    <property type="protein sequence ID" value="AAC67166"/>
    <property type="gene ID" value="BB_0817"/>
</dbReference>
<dbReference type="KEGG" id="bbu:BB_0817"/>
<dbReference type="PATRIC" id="fig|224326.49.peg.1209"/>
<dbReference type="HOGENOM" id="CLU_028104_1_0_12"/>
<dbReference type="OrthoDB" id="9804126at2"/>
<dbReference type="UniPathway" id="UPA00219"/>
<dbReference type="Proteomes" id="UP000001807">
    <property type="component" value="Chromosome"/>
</dbReference>
<dbReference type="GO" id="GO:0005737">
    <property type="term" value="C:cytoplasm"/>
    <property type="evidence" value="ECO:0007669"/>
    <property type="project" value="UniProtKB-SubCell"/>
</dbReference>
<dbReference type="GO" id="GO:0005524">
    <property type="term" value="F:ATP binding"/>
    <property type="evidence" value="ECO:0007669"/>
    <property type="project" value="UniProtKB-UniRule"/>
</dbReference>
<dbReference type="GO" id="GO:0008763">
    <property type="term" value="F:UDP-N-acetylmuramate-L-alanine ligase activity"/>
    <property type="evidence" value="ECO:0007669"/>
    <property type="project" value="UniProtKB-UniRule"/>
</dbReference>
<dbReference type="GO" id="GO:0051301">
    <property type="term" value="P:cell division"/>
    <property type="evidence" value="ECO:0007669"/>
    <property type="project" value="UniProtKB-KW"/>
</dbReference>
<dbReference type="GO" id="GO:0071555">
    <property type="term" value="P:cell wall organization"/>
    <property type="evidence" value="ECO:0007669"/>
    <property type="project" value="UniProtKB-KW"/>
</dbReference>
<dbReference type="GO" id="GO:0009252">
    <property type="term" value="P:peptidoglycan biosynthetic process"/>
    <property type="evidence" value="ECO:0007669"/>
    <property type="project" value="UniProtKB-UniRule"/>
</dbReference>
<dbReference type="GO" id="GO:0008360">
    <property type="term" value="P:regulation of cell shape"/>
    <property type="evidence" value="ECO:0007669"/>
    <property type="project" value="UniProtKB-KW"/>
</dbReference>
<dbReference type="Gene3D" id="3.90.190.20">
    <property type="entry name" value="Mur ligase, C-terminal domain"/>
    <property type="match status" value="1"/>
</dbReference>
<dbReference type="Gene3D" id="3.40.1190.10">
    <property type="entry name" value="Mur-like, catalytic domain"/>
    <property type="match status" value="1"/>
</dbReference>
<dbReference type="Gene3D" id="3.40.50.720">
    <property type="entry name" value="NAD(P)-binding Rossmann-like Domain"/>
    <property type="match status" value="1"/>
</dbReference>
<dbReference type="HAMAP" id="MF_00046">
    <property type="entry name" value="MurC"/>
    <property type="match status" value="1"/>
</dbReference>
<dbReference type="InterPro" id="IPR036565">
    <property type="entry name" value="Mur-like_cat_sf"/>
</dbReference>
<dbReference type="InterPro" id="IPR004101">
    <property type="entry name" value="Mur_ligase_C"/>
</dbReference>
<dbReference type="InterPro" id="IPR036615">
    <property type="entry name" value="Mur_ligase_C_dom_sf"/>
</dbReference>
<dbReference type="InterPro" id="IPR013221">
    <property type="entry name" value="Mur_ligase_cen"/>
</dbReference>
<dbReference type="InterPro" id="IPR000713">
    <property type="entry name" value="Mur_ligase_N"/>
</dbReference>
<dbReference type="InterPro" id="IPR050061">
    <property type="entry name" value="MurCDEF_pg_biosynth"/>
</dbReference>
<dbReference type="InterPro" id="IPR005758">
    <property type="entry name" value="UDP-N-AcMur_Ala_ligase_MurC"/>
</dbReference>
<dbReference type="NCBIfam" id="TIGR01082">
    <property type="entry name" value="murC"/>
    <property type="match status" value="1"/>
</dbReference>
<dbReference type="PANTHER" id="PTHR43445:SF3">
    <property type="entry name" value="UDP-N-ACETYLMURAMATE--L-ALANINE LIGASE"/>
    <property type="match status" value="1"/>
</dbReference>
<dbReference type="PANTHER" id="PTHR43445">
    <property type="entry name" value="UDP-N-ACETYLMURAMATE--L-ALANINE LIGASE-RELATED"/>
    <property type="match status" value="1"/>
</dbReference>
<dbReference type="Pfam" id="PF01225">
    <property type="entry name" value="Mur_ligase"/>
    <property type="match status" value="1"/>
</dbReference>
<dbReference type="Pfam" id="PF02875">
    <property type="entry name" value="Mur_ligase_C"/>
    <property type="match status" value="1"/>
</dbReference>
<dbReference type="Pfam" id="PF08245">
    <property type="entry name" value="Mur_ligase_M"/>
    <property type="match status" value="1"/>
</dbReference>
<dbReference type="SUPFAM" id="SSF51984">
    <property type="entry name" value="MurCD N-terminal domain"/>
    <property type="match status" value="1"/>
</dbReference>
<dbReference type="SUPFAM" id="SSF53623">
    <property type="entry name" value="MurD-like peptide ligases, catalytic domain"/>
    <property type="match status" value="1"/>
</dbReference>
<dbReference type="SUPFAM" id="SSF53244">
    <property type="entry name" value="MurD-like peptide ligases, peptide-binding domain"/>
    <property type="match status" value="1"/>
</dbReference>
<proteinExistence type="inferred from homology"/>
<accession>O51757</accession>
<feature type="chain" id="PRO_0000182061" description="UDP-N-acetylmuramate--L-alanine ligase">
    <location>
        <begin position="1"/>
        <end position="468"/>
    </location>
</feature>
<feature type="binding site" evidence="1">
    <location>
        <begin position="121"/>
        <end position="127"/>
    </location>
    <ligand>
        <name>ATP</name>
        <dbReference type="ChEBI" id="CHEBI:30616"/>
    </ligand>
</feature>
<protein>
    <recommendedName>
        <fullName evidence="1">UDP-N-acetylmuramate--L-alanine ligase</fullName>
        <ecNumber evidence="1">6.3.2.8</ecNumber>
    </recommendedName>
    <alternativeName>
        <fullName evidence="1">UDP-N-acetylmuramoyl-L-alanine synthetase</fullName>
    </alternativeName>
</protein>
<reference key="1">
    <citation type="journal article" date="1997" name="Nature">
        <title>Genomic sequence of a Lyme disease spirochaete, Borrelia burgdorferi.</title>
        <authorList>
            <person name="Fraser C.M."/>
            <person name="Casjens S."/>
            <person name="Huang W.M."/>
            <person name="Sutton G.G."/>
            <person name="Clayton R.A."/>
            <person name="Lathigra R."/>
            <person name="White O."/>
            <person name="Ketchum K.A."/>
            <person name="Dodson R.J."/>
            <person name="Hickey E.K."/>
            <person name="Gwinn M.L."/>
            <person name="Dougherty B.A."/>
            <person name="Tomb J.-F."/>
            <person name="Fleischmann R.D."/>
            <person name="Richardson D.L."/>
            <person name="Peterson J.D."/>
            <person name="Kerlavage A.R."/>
            <person name="Quackenbush J."/>
            <person name="Salzberg S.L."/>
            <person name="Hanson M."/>
            <person name="van Vugt R."/>
            <person name="Palmer N."/>
            <person name="Adams M.D."/>
            <person name="Gocayne J.D."/>
            <person name="Weidman J.F."/>
            <person name="Utterback T.R."/>
            <person name="Watthey L."/>
            <person name="McDonald L.A."/>
            <person name="Artiach P."/>
            <person name="Bowman C."/>
            <person name="Garland S.A."/>
            <person name="Fujii C."/>
            <person name="Cotton M.D."/>
            <person name="Horst K."/>
            <person name="Roberts K.M."/>
            <person name="Hatch B."/>
            <person name="Smith H.O."/>
            <person name="Venter J.C."/>
        </authorList>
    </citation>
    <scope>NUCLEOTIDE SEQUENCE [LARGE SCALE GENOMIC DNA]</scope>
    <source>
        <strain>ATCC 35210 / DSM 4680 / CIP 102532 / B31</strain>
    </source>
</reference>
<evidence type="ECO:0000255" key="1">
    <source>
        <dbReference type="HAMAP-Rule" id="MF_00046"/>
    </source>
</evidence>
<sequence length="468" mass="53480">MKVDFDDLNNIFFVGIKGSGACSLACFLNSKGYCVEGVDVSDKFYTDEILSNNKISYYDNIYEFSLKQLDRSFDLIVYSSAYNKDGLQVLLEAKELNIPILSYPEALGELSRKYYSIGIAGSHGKTTTTAFLGVLFNKLGLNPNVIVGSSVKDFKDNSAIAGISNIFIVETCEYKKHFLNFSPNMLILTNVDYEHVDFFKNYEALEEAFLQYINNLKKNGILIINSDDNNLLKIKRQINRKDISIFSYGSGDLSDFQISNIAVRSEYFCFSFLGLLNVELKTVLFHNVLNFSAALLALNLFLESNGKSIFDFEEAIKRIAKNYSGIKRRVEVVKEENGVIYMDDYAHHPREIKNTLFGIKNFYKNKRIILDFMPHTFTRTKEFFADFVEVLSAADILILHNIYLSNRENFNPDELSVKLFLNIKKINKNTYFFKDVKDSINFIKSLLISGDLFITMGAGNNFILHDFL</sequence>